<organism>
    <name type="scientific">Pseudoalteromonas carrageenovora</name>
    <name type="common">Alteromonas carrageenovora</name>
    <dbReference type="NCBI Taxonomy" id="227"/>
    <lineage>
        <taxon>Bacteria</taxon>
        <taxon>Pseudomonadati</taxon>
        <taxon>Pseudomonadota</taxon>
        <taxon>Gammaproteobacteria</taxon>
        <taxon>Alteromonadales</taxon>
        <taxon>Pseudoalteromonadaceae</taxon>
        <taxon>Pseudoalteromonas</taxon>
    </lineage>
</organism>
<protein>
    <recommendedName>
        <fullName evidence="4">Lambda-carrageenase</fullName>
        <ecNumber>3.2.1.162</ecNumber>
    </recommendedName>
</protein>
<name>CGLA_PSEVC</name>
<feature type="signal peptide" evidence="2">
    <location>
        <begin position="1"/>
        <end position="25"/>
    </location>
</feature>
<feature type="chain" id="PRO_5000080729" description="Lambda-carrageenase" evidence="2">
    <location>
        <begin position="26"/>
        <end position="942"/>
    </location>
</feature>
<keyword id="KW-0119">Carbohydrate metabolism</keyword>
<keyword id="KW-0961">Cell wall biogenesis/degradation</keyword>
<keyword id="KW-0903">Direct protein sequencing</keyword>
<keyword id="KW-0326">Glycosidase</keyword>
<keyword id="KW-0378">Hydrolase</keyword>
<keyword id="KW-0624">Polysaccharide degradation</keyword>
<keyword id="KW-0964">Secreted</keyword>
<keyword id="KW-0732">Signal</keyword>
<comment type="function">
    <text evidence="1 2">Hydrolyzes lambda-carrageenan with inversion of anomeric configuration. Does not hydrolyze iota- and kappa-carrageenans, agarose or porphyran.</text>
</comment>
<comment type="catalytic activity">
    <reaction evidence="2">
        <text>Endohydrolysis of (1-&gt;4)-beta-linkages in the backbone of lambda-carrageenan, resulting in the tetrasaccharide alpha-D-Galp2,6S2-(1-&gt;3)-beta-D-Galp2S-(1-&gt;4)-alpha-D-Galp2,6S2-(1-&gt;3)-D-Galp2S.</text>
        <dbReference type="EC" id="3.2.1.162"/>
    </reaction>
</comment>
<comment type="subunit">
    <text evidence="1">Monomer.</text>
</comment>
<comment type="subcellular location">
    <subcellularLocation>
        <location evidence="2">Secreted</location>
    </subcellularLocation>
</comment>
<proteinExistence type="evidence at protein level"/>
<reference evidence="3 4" key="1">
    <citation type="journal article" date="2007" name="Biochem. J.">
        <title>Degradation of lambda-carrageenan by Pseudoalteromonas carrageenovora lambda-carrageenase: a new family of glycoside hydrolases unrelated to kappa- and iota-carrageenases.</title>
        <authorList>
            <person name="Guibet M."/>
            <person name="Colin S."/>
            <person name="Barbeyron T."/>
            <person name="Genicot S."/>
            <person name="Kloareg B."/>
            <person name="Michel G."/>
            <person name="Helbert W."/>
        </authorList>
    </citation>
    <scope>NUCLEOTIDE SEQUENCE [GENOMIC DNA]</scope>
    <scope>PROTEIN SEQUENCE OF 26-41; 338-345 AND 487-498</scope>
    <scope>FUNCTION</scope>
    <scope>CATALYTIC ACTIVITY</scope>
    <scope>SUBCELLULAR LOCATION</scope>
    <source>
        <strain>ATCC 43555 / DSM 6820 / JCM 8851 / IAM 12662 / NBRC 12985 / NCIMB 302</strain>
    </source>
</reference>
<dbReference type="EC" id="3.2.1.162"/>
<dbReference type="EMBL" id="AM397269">
    <property type="protein sequence ID" value="CAL37005.1"/>
    <property type="molecule type" value="Genomic_DNA"/>
</dbReference>
<dbReference type="SMR" id="Q0JRK4"/>
<dbReference type="BioCyc" id="MetaCyc:MONOMER-16657"/>
<dbReference type="BRENDA" id="3.2.1.162">
    <property type="organism ID" value="273"/>
</dbReference>
<dbReference type="GO" id="GO:0005576">
    <property type="term" value="C:extracellular region"/>
    <property type="evidence" value="ECO:0000314"/>
    <property type="project" value="UniProtKB"/>
</dbReference>
<dbReference type="GO" id="GO:0033957">
    <property type="term" value="F:lambda-carrageenase activity"/>
    <property type="evidence" value="ECO:0000314"/>
    <property type="project" value="UniProtKB"/>
</dbReference>
<dbReference type="GO" id="GO:0071555">
    <property type="term" value="P:cell wall organization"/>
    <property type="evidence" value="ECO:0007669"/>
    <property type="project" value="UniProtKB-KW"/>
</dbReference>
<dbReference type="GO" id="GO:0000272">
    <property type="term" value="P:polysaccharide catabolic process"/>
    <property type="evidence" value="ECO:0000314"/>
    <property type="project" value="UniProtKB"/>
</dbReference>
<dbReference type="FunFam" id="2.130.10.10:FF:002292">
    <property type="entry name" value="Lambda-carrageenase"/>
    <property type="match status" value="1"/>
</dbReference>
<dbReference type="Gene3D" id="2.130.10.10">
    <property type="entry name" value="YVTN repeat-like/Quinoprotein amine dehydrogenase"/>
    <property type="match status" value="1"/>
</dbReference>
<dbReference type="InterPro" id="IPR011047">
    <property type="entry name" value="Quinoprotein_ADH-like_sf"/>
</dbReference>
<dbReference type="InterPro" id="IPR015943">
    <property type="entry name" value="WD40/YVTN_repeat-like_dom_sf"/>
</dbReference>
<dbReference type="Pfam" id="PF25292">
    <property type="entry name" value="Beta-prop_CGLA"/>
    <property type="match status" value="1"/>
</dbReference>
<dbReference type="Pfam" id="PF25291">
    <property type="entry name" value="CGLA_C"/>
    <property type="match status" value="1"/>
</dbReference>
<dbReference type="Pfam" id="PF25290">
    <property type="entry name" value="CGLA_M"/>
    <property type="match status" value="1"/>
</dbReference>
<dbReference type="SUPFAM" id="SSF50998">
    <property type="entry name" value="Quinoprotein alcohol dehydrogenase-like"/>
    <property type="match status" value="1"/>
</dbReference>
<accession>Q0JRK4</accession>
<sequence length="942" mass="105638">MKIKILSAMVASSLLIGCVIPTVKASQSAIKSIETNRTITKVRTGMLSGGSSIITTSYEGTVAAYKFNGEKLWENELSGFMNHDIWVQDINGDGLVEIFAANADGNVYCINSDGSLKWTFGLNEVPMNSVTVISDADKKYVVAGGYDKNLYYISTNGELLKTIESGTYSEEGVFGDGVKPEARTHTVNFVRPVKSSDGTEKLVVLGTNNSLQSSGRFYIFEPFADLPSEKSRISIKKGIGDLRTVDFDNDGNDELTLGNSAQIGDAAISVMNLDDLSQKKSQINDIARRIDRFGYRVAQTEVVMNEGTPTYLTLFGSRILLTPESFDVNDSEILANKYSYYDMWKDKSSNKLVLASAQSGGSQVHIIDTSNPSWKSAYEELEPQGKLAAIQENTRAIERQLSNFQKPTRERAPLPVYFISESRNEIPTTIERSEFLYDSPVFLNYSTLPNVENWDRSEVLADNPKYRDKRDRRKNYTLSSEEMFNKLSAGYDNSDGISQWAGHGNDPYMISLATMKRIISSGDGKKTVNIYPEIEGHGDAFNKVLSDHFYPLAEFSSENNANLFMRNKHTFWQSTIYAPEWSELRSGRLADAFVPAMEETTDKSMEMSVAGRMGLWAAGSVDNWGERYARDNPSFDRLRQHSHQMVPNHALRQIIYKIASGARYINNFGFNQEYMSLAWELIGKGALYVPKREELLSLSPVHISMKEPDPIYRETSNNVKWTTFYDEEKDSIPYVFSRLNGTWPGAKTLPWDYSNYAADTKERRLDFIPKFPKGLVLITPVQQGKFKDEGTVRGTLADNMHPIYKDIMKEYITDGKNYYNPNGEQVMAADSVRYRQIKNKIEEKSNLLPMTVSGEAAWVVAQSAEKHLRLTLVDSGYLNPSNKVAKVKFNSVTPVAIVDVLSGETFSPDSNGVVEIPVLAGAFRFIDVKITEDLRNMQSSTL</sequence>
<gene>
    <name evidence="4" type="primary">cglA</name>
</gene>
<evidence type="ECO:0000250" key="1">
    <source>
        <dbReference type="UniProtKB" id="Q05JY7"/>
    </source>
</evidence>
<evidence type="ECO:0000269" key="2">
    <source>
    </source>
</evidence>
<evidence type="ECO:0000305" key="3"/>
<evidence type="ECO:0000312" key="4">
    <source>
        <dbReference type="EMBL" id="CAL37005.1"/>
    </source>
</evidence>